<gene>
    <name type="primary">ROC6</name>
    <name type="synonym">GL2-6</name>
    <name type="ordered locus">Os09g0526300</name>
    <name type="ordered locus">LOC_Os09g35760</name>
</gene>
<name>ROC6_ORYSJ</name>
<keyword id="KW-0175">Coiled coil</keyword>
<keyword id="KW-0238">DNA-binding</keyword>
<keyword id="KW-0371">Homeobox</keyword>
<keyword id="KW-0539">Nucleus</keyword>
<keyword id="KW-1185">Reference proteome</keyword>
<keyword id="KW-0804">Transcription</keyword>
<keyword id="KW-0805">Transcription regulation</keyword>
<organism>
    <name type="scientific">Oryza sativa subsp. japonica</name>
    <name type="common">Rice</name>
    <dbReference type="NCBI Taxonomy" id="39947"/>
    <lineage>
        <taxon>Eukaryota</taxon>
        <taxon>Viridiplantae</taxon>
        <taxon>Streptophyta</taxon>
        <taxon>Embryophyta</taxon>
        <taxon>Tracheophyta</taxon>
        <taxon>Spermatophyta</taxon>
        <taxon>Magnoliopsida</taxon>
        <taxon>Liliopsida</taxon>
        <taxon>Poales</taxon>
        <taxon>Poaceae</taxon>
        <taxon>BOP clade</taxon>
        <taxon>Oryzoideae</taxon>
        <taxon>Oryzeae</taxon>
        <taxon>Oryzinae</taxon>
        <taxon>Oryza</taxon>
        <taxon>Oryza sativa</taxon>
    </lineage>
</organism>
<proteinExistence type="evidence at transcript level"/>
<evidence type="ECO:0000250" key="1"/>
<evidence type="ECO:0000255" key="2"/>
<evidence type="ECO:0000255" key="3">
    <source>
        <dbReference type="PROSITE-ProRule" id="PRU00108"/>
    </source>
</evidence>
<evidence type="ECO:0000255" key="4">
    <source>
        <dbReference type="PROSITE-ProRule" id="PRU00197"/>
    </source>
</evidence>
<evidence type="ECO:0000256" key="5">
    <source>
        <dbReference type="SAM" id="MobiDB-lite"/>
    </source>
</evidence>
<evidence type="ECO:0000305" key="6"/>
<sequence>MSFGGMFDGAGSGVFSYDAGGGGGGGGVHNSRLLPTPPVPKPGGGFAAPGLSLGLQTMDGSQLGDVNRSLAMMGNGGSGSGGDGDSLGRGREEENDSRSGSDNLDGASGDELDPDNSNPRKKKKRYHRHTPQQIQELEAVFKECPHPDEKQRMELSRRLNLESRQVKFWFQNRRTQMKQTQIERHENALLRQENDKLRAENMTIREAMRNPMCASCGGAAVLGEVSLEEQHLRIENARLKDELDRVCALAGKFLGRPISSISSPGPPSLQACSGLELGVGSNGGFGLGALGASAAMQSIPDLMGGSSGLTGGPVGSAAMRLPAGIGGLDGAMHAAAADGGAIDRAVLLELALAAMDELVKVAQMDEPLWLPSLDGGFETLNYDEYHRAFARVVGQCPAGYVSEATRESGIAIISSVDLVDSLMDAPRWSEMFPCVVARASTTDIISSGMGGTRSGSIQLMHAELQVLSPLVPIREVVFLRFCKQHAEGLWAVVDVSVDAVLRPDQNGGGGSSSSSYMGCRLLPTGCIVQDMNNGYSKVTWVVHAEYDETAAHQLYRPLLRSGQALGARRWLASLQRQCQYLAILCSNSLPARDHAAITPVGRRSMLKLAQRMTDNFCAGVCASAAQKWRRLDEWRGEGGGGGGGGGGDGEDKVRMMARHSVGAPGEPPGVVLSATTSVRLPGTLPQRVFDYLRDEQRRGDWDILANGEAMQEMDHIAKGQHHGNAVSLLRPNATSGNQNNMLILQETCTDSSGSLVVYAPVDVQSMHVVMNGGDSAYVSLLPSGFAILPDGHNNGASPSPAEVGSGASPNSAAGGGGGSNNTGSLVTVAFQILVNNLPTAKLTVESVDTVSNLLSCTIQKIKSALQASIISP</sequence>
<protein>
    <recommendedName>
        <fullName>Homeobox-leucine zipper protein ROC6</fullName>
    </recommendedName>
    <alternativeName>
        <fullName>GLABRA 2-like homeobox protein 6</fullName>
    </alternativeName>
    <alternativeName>
        <fullName>HD-ZIP protein ROC6</fullName>
    </alternativeName>
    <alternativeName>
        <fullName>Homeodomain transcription factor ROC6</fullName>
    </alternativeName>
    <alternativeName>
        <fullName>Protein RICE OUTERMOST CELL-SPECIFIC 6</fullName>
    </alternativeName>
</protein>
<dbReference type="EMBL" id="AP008215">
    <property type="protein sequence ID" value="BAF25639.1"/>
    <property type="status" value="ALT_SEQ"/>
    <property type="molecule type" value="Genomic_DNA"/>
</dbReference>
<dbReference type="EMBL" id="AP014965">
    <property type="status" value="NOT_ANNOTATED_CDS"/>
    <property type="molecule type" value="Genomic_DNA"/>
</dbReference>
<dbReference type="EMBL" id="AB101649">
    <property type="protein sequence ID" value="BAC77159.1"/>
    <property type="molecule type" value="mRNA"/>
</dbReference>
<dbReference type="SMR" id="Q7Y0V7"/>
<dbReference type="FunCoup" id="Q7Y0V7">
    <property type="interactions" value="295"/>
</dbReference>
<dbReference type="STRING" id="39947.Q7Y0V7"/>
<dbReference type="PaxDb" id="39947-Q7Y0V7"/>
<dbReference type="KEGG" id="dosa:Os09g0526300"/>
<dbReference type="eggNOG" id="ENOG502QUAY">
    <property type="taxonomic scope" value="Eukaryota"/>
</dbReference>
<dbReference type="InParanoid" id="Q7Y0V7"/>
<dbReference type="Proteomes" id="UP000000763">
    <property type="component" value="Chromosome 9"/>
</dbReference>
<dbReference type="Proteomes" id="UP000059680">
    <property type="component" value="Chromosome 9"/>
</dbReference>
<dbReference type="GO" id="GO:0005634">
    <property type="term" value="C:nucleus"/>
    <property type="evidence" value="ECO:0007669"/>
    <property type="project" value="UniProtKB-SubCell"/>
</dbReference>
<dbReference type="GO" id="GO:0003677">
    <property type="term" value="F:DNA binding"/>
    <property type="evidence" value="ECO:0007669"/>
    <property type="project" value="UniProtKB-KW"/>
</dbReference>
<dbReference type="GO" id="GO:0000981">
    <property type="term" value="F:DNA-binding transcription factor activity, RNA polymerase II-specific"/>
    <property type="evidence" value="ECO:0007669"/>
    <property type="project" value="InterPro"/>
</dbReference>
<dbReference type="GO" id="GO:0008289">
    <property type="term" value="F:lipid binding"/>
    <property type="evidence" value="ECO:0007669"/>
    <property type="project" value="InterPro"/>
</dbReference>
<dbReference type="CDD" id="cd00086">
    <property type="entry name" value="homeodomain"/>
    <property type="match status" value="1"/>
</dbReference>
<dbReference type="CDD" id="cd08875">
    <property type="entry name" value="START_ArGLABRA2_like"/>
    <property type="match status" value="1"/>
</dbReference>
<dbReference type="FunFam" id="1.10.10.60:FF:000229">
    <property type="entry name" value="Homeobox-leucine zipper protein HDG1"/>
    <property type="match status" value="1"/>
</dbReference>
<dbReference type="Gene3D" id="3.30.530.20">
    <property type="match status" value="1"/>
</dbReference>
<dbReference type="Gene3D" id="1.10.10.60">
    <property type="entry name" value="Homeodomain-like"/>
    <property type="match status" value="1"/>
</dbReference>
<dbReference type="InterPro" id="IPR042160">
    <property type="entry name" value="GLABRA2/ANL2/PDF2/ATML1-like"/>
</dbReference>
<dbReference type="InterPro" id="IPR001356">
    <property type="entry name" value="HD"/>
</dbReference>
<dbReference type="InterPro" id="IPR017970">
    <property type="entry name" value="Homeobox_CS"/>
</dbReference>
<dbReference type="InterPro" id="IPR009057">
    <property type="entry name" value="Homeodomain-like_sf"/>
</dbReference>
<dbReference type="InterPro" id="IPR023393">
    <property type="entry name" value="START-like_dom_sf"/>
</dbReference>
<dbReference type="InterPro" id="IPR002913">
    <property type="entry name" value="START_lipid-bd_dom"/>
</dbReference>
<dbReference type="PANTHER" id="PTHR45654">
    <property type="entry name" value="HOMEOBOX-LEUCINE ZIPPER PROTEIN MERISTEM L1"/>
    <property type="match status" value="1"/>
</dbReference>
<dbReference type="PANTHER" id="PTHR45654:SF111">
    <property type="entry name" value="HOMEOBOX-LEUCINE ZIPPER PROTEIN ROC6"/>
    <property type="match status" value="1"/>
</dbReference>
<dbReference type="Pfam" id="PF00046">
    <property type="entry name" value="Homeodomain"/>
    <property type="match status" value="1"/>
</dbReference>
<dbReference type="Pfam" id="PF01852">
    <property type="entry name" value="START"/>
    <property type="match status" value="1"/>
</dbReference>
<dbReference type="SMART" id="SM00389">
    <property type="entry name" value="HOX"/>
    <property type="match status" value="1"/>
</dbReference>
<dbReference type="SMART" id="SM00234">
    <property type="entry name" value="START"/>
    <property type="match status" value="1"/>
</dbReference>
<dbReference type="SUPFAM" id="SSF55961">
    <property type="entry name" value="Bet v1-like"/>
    <property type="match status" value="2"/>
</dbReference>
<dbReference type="SUPFAM" id="SSF46689">
    <property type="entry name" value="Homeodomain-like"/>
    <property type="match status" value="1"/>
</dbReference>
<dbReference type="PROSITE" id="PS00027">
    <property type="entry name" value="HOMEOBOX_1"/>
    <property type="match status" value="1"/>
</dbReference>
<dbReference type="PROSITE" id="PS50071">
    <property type="entry name" value="HOMEOBOX_2"/>
    <property type="match status" value="1"/>
</dbReference>
<dbReference type="PROSITE" id="PS50848">
    <property type="entry name" value="START"/>
    <property type="match status" value="1"/>
</dbReference>
<accession>Q7Y0V7</accession>
<accession>Q0J076</accession>
<reference key="1">
    <citation type="journal article" date="2005" name="Nature">
        <title>The map-based sequence of the rice genome.</title>
        <authorList>
            <consortium name="International rice genome sequencing project (IRGSP)"/>
        </authorList>
    </citation>
    <scope>NUCLEOTIDE SEQUENCE [LARGE SCALE GENOMIC DNA]</scope>
    <source>
        <strain>cv. Nipponbare</strain>
    </source>
</reference>
<reference key="2">
    <citation type="journal article" date="2008" name="Nucleic Acids Res.">
        <title>The rice annotation project database (RAP-DB): 2008 update.</title>
        <authorList>
            <consortium name="The rice annotation project (RAP)"/>
        </authorList>
    </citation>
    <scope>GENOME REANNOTATION</scope>
    <source>
        <strain>cv. Nipponbare</strain>
    </source>
</reference>
<reference key="3">
    <citation type="journal article" date="2013" name="Rice">
        <title>Improvement of the Oryza sativa Nipponbare reference genome using next generation sequence and optical map data.</title>
        <authorList>
            <person name="Kawahara Y."/>
            <person name="de la Bastide M."/>
            <person name="Hamilton J.P."/>
            <person name="Kanamori H."/>
            <person name="McCombie W.R."/>
            <person name="Ouyang S."/>
            <person name="Schwartz D.C."/>
            <person name="Tanaka T."/>
            <person name="Wu J."/>
            <person name="Zhou S."/>
            <person name="Childs K.L."/>
            <person name="Davidson R.M."/>
            <person name="Lin H."/>
            <person name="Quesada-Ocampo L."/>
            <person name="Vaillancourt B."/>
            <person name="Sakai H."/>
            <person name="Lee S.S."/>
            <person name="Kim J."/>
            <person name="Numa H."/>
            <person name="Itoh T."/>
            <person name="Buell C.R."/>
            <person name="Matsumoto T."/>
        </authorList>
    </citation>
    <scope>GENOME REANNOTATION</scope>
    <source>
        <strain>cv. Nipponbare</strain>
    </source>
</reference>
<reference key="4">
    <citation type="submission" date="2003-01" db="EMBL/GenBank/DDBJ databases">
        <title>The roles of rice GL2-type homeobox genes in epidermis differentiation.</title>
        <authorList>
            <person name="Ito M."/>
            <person name="Sentoku N."/>
            <person name="Nishimura A."/>
            <person name="Hong S.-K."/>
            <person name="Sato Y."/>
            <person name="Matsuoka M."/>
        </authorList>
    </citation>
    <scope>NUCLEOTIDE SEQUENCE [MRNA] OF 122-252</scope>
</reference>
<comment type="function">
    <text evidence="1">Probable transcription factor.</text>
</comment>
<comment type="subcellular location">
    <subcellularLocation>
        <location evidence="6">Nucleus</location>
    </subcellularLocation>
</comment>
<comment type="similarity">
    <text evidence="6">Belongs to the HD-ZIP homeobox family. Class IV subfamily.</text>
</comment>
<comment type="sequence caution" evidence="6">
    <conflict type="erroneous gene model prediction">
        <sequence resource="EMBL-CDS" id="BAF25639"/>
    </conflict>
</comment>
<feature type="chain" id="PRO_0000331743" description="Homeobox-leucine zipper protein ROC6">
    <location>
        <begin position="1"/>
        <end position="872"/>
    </location>
</feature>
<feature type="domain" description="START" evidence="4">
    <location>
        <begin position="340"/>
        <end position="583"/>
    </location>
</feature>
<feature type="DNA-binding region" description="Homeobox" evidence="3">
    <location>
        <begin position="122"/>
        <end position="181"/>
    </location>
</feature>
<feature type="region of interest" description="Disordered" evidence="5">
    <location>
        <begin position="28"/>
        <end position="53"/>
    </location>
</feature>
<feature type="region of interest" description="Disordered" evidence="5">
    <location>
        <begin position="67"/>
        <end position="130"/>
    </location>
</feature>
<feature type="region of interest" description="Disordered" evidence="5">
    <location>
        <begin position="792"/>
        <end position="818"/>
    </location>
</feature>
<feature type="coiled-coil region" evidence="2">
    <location>
        <begin position="176"/>
        <end position="248"/>
    </location>
</feature>
<feature type="compositionally biased region" description="Gly residues" evidence="5">
    <location>
        <begin position="74"/>
        <end position="85"/>
    </location>
</feature>
<feature type="compositionally biased region" description="Basic and acidic residues" evidence="5">
    <location>
        <begin position="86"/>
        <end position="99"/>
    </location>
</feature>
<feature type="compositionally biased region" description="Basic residues" evidence="5">
    <location>
        <begin position="119"/>
        <end position="130"/>
    </location>
</feature>